<dbReference type="EC" id="1.17.1.8" evidence="1"/>
<dbReference type="EMBL" id="CP000410">
    <property type="protein sequence ID" value="ABJ53920.1"/>
    <property type="molecule type" value="Genomic_DNA"/>
</dbReference>
<dbReference type="RefSeq" id="WP_000027902.1">
    <property type="nucleotide sequence ID" value="NZ_JAMLJR010000008.1"/>
</dbReference>
<dbReference type="SMR" id="Q04JJ1"/>
<dbReference type="PaxDb" id="373153-SPD_1387"/>
<dbReference type="KEGG" id="spd:SPD_1387"/>
<dbReference type="eggNOG" id="COG0289">
    <property type="taxonomic scope" value="Bacteria"/>
</dbReference>
<dbReference type="HOGENOM" id="CLU_047479_0_1_9"/>
<dbReference type="BioCyc" id="SPNE373153:G1G6V-1492-MONOMER"/>
<dbReference type="UniPathway" id="UPA00034">
    <property type="reaction ID" value="UER00018"/>
</dbReference>
<dbReference type="Proteomes" id="UP000001452">
    <property type="component" value="Chromosome"/>
</dbReference>
<dbReference type="GO" id="GO:0005829">
    <property type="term" value="C:cytosol"/>
    <property type="evidence" value="ECO:0007669"/>
    <property type="project" value="TreeGrafter"/>
</dbReference>
<dbReference type="GO" id="GO:0008839">
    <property type="term" value="F:4-hydroxy-tetrahydrodipicolinate reductase"/>
    <property type="evidence" value="ECO:0007669"/>
    <property type="project" value="UniProtKB-EC"/>
</dbReference>
<dbReference type="GO" id="GO:0051287">
    <property type="term" value="F:NAD binding"/>
    <property type="evidence" value="ECO:0007669"/>
    <property type="project" value="UniProtKB-UniRule"/>
</dbReference>
<dbReference type="GO" id="GO:0050661">
    <property type="term" value="F:NADP binding"/>
    <property type="evidence" value="ECO:0007669"/>
    <property type="project" value="UniProtKB-UniRule"/>
</dbReference>
<dbReference type="GO" id="GO:0016726">
    <property type="term" value="F:oxidoreductase activity, acting on CH or CH2 groups, NAD or NADP as acceptor"/>
    <property type="evidence" value="ECO:0007669"/>
    <property type="project" value="UniProtKB-UniRule"/>
</dbReference>
<dbReference type="GO" id="GO:0019877">
    <property type="term" value="P:diaminopimelate biosynthetic process"/>
    <property type="evidence" value="ECO:0007669"/>
    <property type="project" value="UniProtKB-UniRule"/>
</dbReference>
<dbReference type="GO" id="GO:0009089">
    <property type="term" value="P:lysine biosynthetic process via diaminopimelate"/>
    <property type="evidence" value="ECO:0007669"/>
    <property type="project" value="UniProtKB-UniRule"/>
</dbReference>
<dbReference type="CDD" id="cd02274">
    <property type="entry name" value="DHDPR_N"/>
    <property type="match status" value="1"/>
</dbReference>
<dbReference type="FunFam" id="3.30.360.10:FF:000009">
    <property type="entry name" value="4-hydroxy-tetrahydrodipicolinate reductase"/>
    <property type="match status" value="1"/>
</dbReference>
<dbReference type="Gene3D" id="3.30.360.10">
    <property type="entry name" value="Dihydrodipicolinate Reductase, domain 2"/>
    <property type="match status" value="1"/>
</dbReference>
<dbReference type="Gene3D" id="3.40.50.720">
    <property type="entry name" value="NAD(P)-binding Rossmann-like Domain"/>
    <property type="match status" value="1"/>
</dbReference>
<dbReference type="HAMAP" id="MF_00102">
    <property type="entry name" value="DapB"/>
    <property type="match status" value="1"/>
</dbReference>
<dbReference type="InterPro" id="IPR022663">
    <property type="entry name" value="DapB_C"/>
</dbReference>
<dbReference type="InterPro" id="IPR000846">
    <property type="entry name" value="DapB_N"/>
</dbReference>
<dbReference type="InterPro" id="IPR022664">
    <property type="entry name" value="DapB_N_CS"/>
</dbReference>
<dbReference type="InterPro" id="IPR023940">
    <property type="entry name" value="DHDPR_bac"/>
</dbReference>
<dbReference type="InterPro" id="IPR036291">
    <property type="entry name" value="NAD(P)-bd_dom_sf"/>
</dbReference>
<dbReference type="NCBIfam" id="TIGR00036">
    <property type="entry name" value="dapB"/>
    <property type="match status" value="1"/>
</dbReference>
<dbReference type="PANTHER" id="PTHR20836:SF0">
    <property type="entry name" value="4-HYDROXY-TETRAHYDRODIPICOLINATE REDUCTASE 1, CHLOROPLASTIC-RELATED"/>
    <property type="match status" value="1"/>
</dbReference>
<dbReference type="PANTHER" id="PTHR20836">
    <property type="entry name" value="DIHYDRODIPICOLINATE REDUCTASE"/>
    <property type="match status" value="1"/>
</dbReference>
<dbReference type="Pfam" id="PF05173">
    <property type="entry name" value="DapB_C"/>
    <property type="match status" value="1"/>
</dbReference>
<dbReference type="Pfam" id="PF01113">
    <property type="entry name" value="DapB_N"/>
    <property type="match status" value="1"/>
</dbReference>
<dbReference type="PIRSF" id="PIRSF000161">
    <property type="entry name" value="DHPR"/>
    <property type="match status" value="1"/>
</dbReference>
<dbReference type="SUPFAM" id="SSF55347">
    <property type="entry name" value="Glyceraldehyde-3-phosphate dehydrogenase-like, C-terminal domain"/>
    <property type="match status" value="1"/>
</dbReference>
<dbReference type="SUPFAM" id="SSF51735">
    <property type="entry name" value="NAD(P)-binding Rossmann-fold domains"/>
    <property type="match status" value="1"/>
</dbReference>
<dbReference type="PROSITE" id="PS01298">
    <property type="entry name" value="DAPB"/>
    <property type="match status" value="1"/>
</dbReference>
<keyword id="KW-0028">Amino-acid biosynthesis</keyword>
<keyword id="KW-0963">Cytoplasm</keyword>
<keyword id="KW-0220">Diaminopimelate biosynthesis</keyword>
<keyword id="KW-0457">Lysine biosynthesis</keyword>
<keyword id="KW-0520">NAD</keyword>
<keyword id="KW-0521">NADP</keyword>
<keyword id="KW-0560">Oxidoreductase</keyword>
<keyword id="KW-1185">Reference proteome</keyword>
<gene>
    <name evidence="1" type="primary">dapB</name>
    <name type="ordered locus">SPD_1387</name>
</gene>
<evidence type="ECO:0000255" key="1">
    <source>
        <dbReference type="HAMAP-Rule" id="MF_00102"/>
    </source>
</evidence>
<evidence type="ECO:0000305" key="2"/>
<feature type="chain" id="PRO_1000008645" description="4-hydroxy-tetrahydrodipicolinate reductase">
    <location>
        <begin position="1"/>
        <end position="255"/>
    </location>
</feature>
<feature type="active site" description="Proton donor/acceptor" evidence="1">
    <location>
        <position position="145"/>
    </location>
</feature>
<feature type="active site" description="Proton donor" evidence="1">
    <location>
        <position position="149"/>
    </location>
</feature>
<feature type="binding site" evidence="1">
    <location>
        <begin position="9"/>
        <end position="14"/>
    </location>
    <ligand>
        <name>NAD(+)</name>
        <dbReference type="ChEBI" id="CHEBI:57540"/>
    </ligand>
</feature>
<feature type="binding site" evidence="1">
    <location>
        <position position="35"/>
    </location>
    <ligand>
        <name>NAD(+)</name>
        <dbReference type="ChEBI" id="CHEBI:57540"/>
    </ligand>
</feature>
<feature type="binding site" evidence="1">
    <location>
        <begin position="89"/>
        <end position="91"/>
    </location>
    <ligand>
        <name>NAD(+)</name>
        <dbReference type="ChEBI" id="CHEBI:57540"/>
    </ligand>
</feature>
<feature type="binding site" evidence="1">
    <location>
        <begin position="115"/>
        <end position="118"/>
    </location>
    <ligand>
        <name>NAD(+)</name>
        <dbReference type="ChEBI" id="CHEBI:57540"/>
    </ligand>
</feature>
<feature type="binding site" evidence="1">
    <location>
        <position position="146"/>
    </location>
    <ligand>
        <name>(S)-2,3,4,5-tetrahydrodipicolinate</name>
        <dbReference type="ChEBI" id="CHEBI:16845"/>
    </ligand>
</feature>
<feature type="binding site" evidence="1">
    <location>
        <begin position="155"/>
        <end position="156"/>
    </location>
    <ligand>
        <name>(S)-2,3,4,5-tetrahydrodipicolinate</name>
        <dbReference type="ChEBI" id="CHEBI:16845"/>
    </ligand>
</feature>
<sequence>MSIRVIIAGFKGKMGQAACQMVLTDPDLDLVAVLDPFESESEWQGIPVFKDKADLAGFEADVWVDFTTPAVAYENTRFALENGFAPVVGTTGFTSEEIAELKEFSRAQDLGGLIAPNFALGAVLLMQFATQAAKYFPNVEIIELHHDKKKDAPSGTAIKTAELMAEVRESIQQGAADEEELIAGARGADFDGMRIHSVRLPGLVAHQEVIFGNQGEGLTLRHDSYDRISFMTGVNLGIKEVVKRHELVYGLEHLL</sequence>
<protein>
    <recommendedName>
        <fullName evidence="1">4-hydroxy-tetrahydrodipicolinate reductase</fullName>
        <shortName evidence="1">HTPA reductase</shortName>
        <ecNumber evidence="1">1.17.1.8</ecNumber>
    </recommendedName>
</protein>
<comment type="function">
    <text evidence="1">Catalyzes the conversion of 4-hydroxy-tetrahydrodipicolinate (HTPA) to tetrahydrodipicolinate.</text>
</comment>
<comment type="catalytic activity">
    <reaction evidence="1">
        <text>(S)-2,3,4,5-tetrahydrodipicolinate + NAD(+) + H2O = (2S,4S)-4-hydroxy-2,3,4,5-tetrahydrodipicolinate + NADH + H(+)</text>
        <dbReference type="Rhea" id="RHEA:35323"/>
        <dbReference type="ChEBI" id="CHEBI:15377"/>
        <dbReference type="ChEBI" id="CHEBI:15378"/>
        <dbReference type="ChEBI" id="CHEBI:16845"/>
        <dbReference type="ChEBI" id="CHEBI:57540"/>
        <dbReference type="ChEBI" id="CHEBI:57945"/>
        <dbReference type="ChEBI" id="CHEBI:67139"/>
        <dbReference type="EC" id="1.17.1.8"/>
    </reaction>
</comment>
<comment type="catalytic activity">
    <reaction evidence="1">
        <text>(S)-2,3,4,5-tetrahydrodipicolinate + NADP(+) + H2O = (2S,4S)-4-hydroxy-2,3,4,5-tetrahydrodipicolinate + NADPH + H(+)</text>
        <dbReference type="Rhea" id="RHEA:35331"/>
        <dbReference type="ChEBI" id="CHEBI:15377"/>
        <dbReference type="ChEBI" id="CHEBI:15378"/>
        <dbReference type="ChEBI" id="CHEBI:16845"/>
        <dbReference type="ChEBI" id="CHEBI:57783"/>
        <dbReference type="ChEBI" id="CHEBI:58349"/>
        <dbReference type="ChEBI" id="CHEBI:67139"/>
        <dbReference type="EC" id="1.17.1.8"/>
    </reaction>
</comment>
<comment type="pathway">
    <text evidence="1">Amino-acid biosynthesis; L-lysine biosynthesis via DAP pathway; (S)-tetrahydrodipicolinate from L-aspartate: step 4/4.</text>
</comment>
<comment type="subcellular location">
    <subcellularLocation>
        <location evidence="1">Cytoplasm</location>
    </subcellularLocation>
</comment>
<comment type="similarity">
    <text evidence="1">Belongs to the DapB family.</text>
</comment>
<comment type="caution">
    <text evidence="2">Was originally thought to be a dihydrodipicolinate reductase (DHDPR), catalyzing the conversion of dihydrodipicolinate to tetrahydrodipicolinate. However, it was shown in E.coli that the substrate of the enzymatic reaction is not dihydrodipicolinate (DHDP) but in fact (2S,4S)-4-hydroxy-2,3,4,5-tetrahydrodipicolinic acid (HTPA), the product released by the DapA-catalyzed reaction.</text>
</comment>
<name>DAPB_STRP2</name>
<reference key="1">
    <citation type="journal article" date="2007" name="J. Bacteriol.">
        <title>Genome sequence of Avery's virulent serotype 2 strain D39 of Streptococcus pneumoniae and comparison with that of unencapsulated laboratory strain R6.</title>
        <authorList>
            <person name="Lanie J.A."/>
            <person name="Ng W.-L."/>
            <person name="Kazmierczak K.M."/>
            <person name="Andrzejewski T.M."/>
            <person name="Davidsen T.M."/>
            <person name="Wayne K.J."/>
            <person name="Tettelin H."/>
            <person name="Glass J.I."/>
            <person name="Winkler M.E."/>
        </authorList>
    </citation>
    <scope>NUCLEOTIDE SEQUENCE [LARGE SCALE GENOMIC DNA]</scope>
    <source>
        <strain>D39 / NCTC 7466</strain>
    </source>
</reference>
<organism>
    <name type="scientific">Streptococcus pneumoniae serotype 2 (strain D39 / NCTC 7466)</name>
    <dbReference type="NCBI Taxonomy" id="373153"/>
    <lineage>
        <taxon>Bacteria</taxon>
        <taxon>Bacillati</taxon>
        <taxon>Bacillota</taxon>
        <taxon>Bacilli</taxon>
        <taxon>Lactobacillales</taxon>
        <taxon>Streptococcaceae</taxon>
        <taxon>Streptococcus</taxon>
    </lineage>
</organism>
<proteinExistence type="inferred from homology"/>
<accession>Q04JJ1</accession>